<name>DEOC_UREP2</name>
<organism>
    <name type="scientific">Ureaplasma parvum serovar 3 (strain ATCC 27815 / 27 / NCTC 11736)</name>
    <dbReference type="NCBI Taxonomy" id="505682"/>
    <lineage>
        <taxon>Bacteria</taxon>
        <taxon>Bacillati</taxon>
        <taxon>Mycoplasmatota</taxon>
        <taxon>Mycoplasmoidales</taxon>
        <taxon>Mycoplasmoidaceae</taxon>
        <taxon>Ureaplasma</taxon>
    </lineage>
</organism>
<proteinExistence type="inferred from homology"/>
<sequence>MNKYNIYVDHTLLKADASLEEIHKLCEEAEENEFYSVCINPCFVKVAKHYLLETSVKICTVIGFPLGANTIETKVFETKNAIDLGADEIDMVININQLINGNREYCLNEINQIKEVCGDKILKVIVETAFLNREQKEFAAKIILESNADFIKTSTGFAKEGAKLEDIILWKRILGDVKQIKASGGIKNFEDFKSFIEAGATRIGTSSAIKILNNH</sequence>
<accession>B1AJM6</accession>
<gene>
    <name evidence="1" type="primary">deoC</name>
    <name type="ordered locus">UPA3_0624</name>
</gene>
<reference key="1">
    <citation type="submission" date="2008-02" db="EMBL/GenBank/DDBJ databases">
        <title>Genome sequence of Ureaplasma parvum serovar 3.</title>
        <authorList>
            <person name="Methe B.A."/>
            <person name="Glass J."/>
            <person name="Waites K."/>
            <person name="Shrivastava S."/>
        </authorList>
    </citation>
    <scope>NUCLEOTIDE SEQUENCE [LARGE SCALE GENOMIC DNA]</scope>
    <source>
        <strain>ATCC 27815 / 27 / NCTC 11736</strain>
    </source>
</reference>
<dbReference type="EC" id="4.1.2.4" evidence="1"/>
<dbReference type="EMBL" id="CP000942">
    <property type="protein sequence ID" value="ACA32910.1"/>
    <property type="molecule type" value="Genomic_DNA"/>
</dbReference>
<dbReference type="RefSeq" id="WP_006688583.1">
    <property type="nucleotide sequence ID" value="NC_010503.1"/>
</dbReference>
<dbReference type="SMR" id="B1AJM6"/>
<dbReference type="GeneID" id="29672297"/>
<dbReference type="KEGG" id="upa:UPA3_0624"/>
<dbReference type="HOGENOM" id="CLU_053595_0_2_14"/>
<dbReference type="UniPathway" id="UPA00002">
    <property type="reaction ID" value="UER00468"/>
</dbReference>
<dbReference type="Proteomes" id="UP000002162">
    <property type="component" value="Chromosome"/>
</dbReference>
<dbReference type="GO" id="GO:0005737">
    <property type="term" value="C:cytoplasm"/>
    <property type="evidence" value="ECO:0007669"/>
    <property type="project" value="UniProtKB-SubCell"/>
</dbReference>
<dbReference type="GO" id="GO:0004139">
    <property type="term" value="F:deoxyribose-phosphate aldolase activity"/>
    <property type="evidence" value="ECO:0007669"/>
    <property type="project" value="UniProtKB-UniRule"/>
</dbReference>
<dbReference type="GO" id="GO:0006018">
    <property type="term" value="P:2-deoxyribose 1-phosphate catabolic process"/>
    <property type="evidence" value="ECO:0007669"/>
    <property type="project" value="UniProtKB-UniRule"/>
</dbReference>
<dbReference type="GO" id="GO:0016052">
    <property type="term" value="P:carbohydrate catabolic process"/>
    <property type="evidence" value="ECO:0007669"/>
    <property type="project" value="TreeGrafter"/>
</dbReference>
<dbReference type="GO" id="GO:0009264">
    <property type="term" value="P:deoxyribonucleotide catabolic process"/>
    <property type="evidence" value="ECO:0007669"/>
    <property type="project" value="InterPro"/>
</dbReference>
<dbReference type="CDD" id="cd00959">
    <property type="entry name" value="DeoC"/>
    <property type="match status" value="1"/>
</dbReference>
<dbReference type="FunFam" id="3.20.20.70:FF:000044">
    <property type="entry name" value="Deoxyribose-phosphate aldolase"/>
    <property type="match status" value="1"/>
</dbReference>
<dbReference type="Gene3D" id="3.20.20.70">
    <property type="entry name" value="Aldolase class I"/>
    <property type="match status" value="1"/>
</dbReference>
<dbReference type="HAMAP" id="MF_00114">
    <property type="entry name" value="DeoC_type1"/>
    <property type="match status" value="1"/>
</dbReference>
<dbReference type="InterPro" id="IPR013785">
    <property type="entry name" value="Aldolase_TIM"/>
</dbReference>
<dbReference type="InterPro" id="IPR011343">
    <property type="entry name" value="DeoC"/>
</dbReference>
<dbReference type="InterPro" id="IPR002915">
    <property type="entry name" value="DeoC/FbaB/LacD_aldolase"/>
</dbReference>
<dbReference type="InterPro" id="IPR028581">
    <property type="entry name" value="DeoC_typeI"/>
</dbReference>
<dbReference type="NCBIfam" id="TIGR00126">
    <property type="entry name" value="deoC"/>
    <property type="match status" value="1"/>
</dbReference>
<dbReference type="PANTHER" id="PTHR10889">
    <property type="entry name" value="DEOXYRIBOSE-PHOSPHATE ALDOLASE"/>
    <property type="match status" value="1"/>
</dbReference>
<dbReference type="PANTHER" id="PTHR10889:SF1">
    <property type="entry name" value="DEOXYRIBOSE-PHOSPHATE ALDOLASE"/>
    <property type="match status" value="1"/>
</dbReference>
<dbReference type="Pfam" id="PF01791">
    <property type="entry name" value="DeoC"/>
    <property type="match status" value="1"/>
</dbReference>
<dbReference type="PIRSF" id="PIRSF001357">
    <property type="entry name" value="DeoC"/>
    <property type="match status" value="1"/>
</dbReference>
<dbReference type="SMART" id="SM01133">
    <property type="entry name" value="DeoC"/>
    <property type="match status" value="1"/>
</dbReference>
<dbReference type="SUPFAM" id="SSF51569">
    <property type="entry name" value="Aldolase"/>
    <property type="match status" value="1"/>
</dbReference>
<feature type="chain" id="PRO_1000076031" description="Deoxyribose-phosphate aldolase">
    <location>
        <begin position="1"/>
        <end position="215"/>
    </location>
</feature>
<feature type="active site" description="Proton donor/acceptor" evidence="1">
    <location>
        <position position="90"/>
    </location>
</feature>
<feature type="active site" description="Schiff-base intermediate with acetaldehyde" evidence="1">
    <location>
        <position position="152"/>
    </location>
</feature>
<feature type="active site" description="Proton donor/acceptor" evidence="1">
    <location>
        <position position="181"/>
    </location>
</feature>
<evidence type="ECO:0000255" key="1">
    <source>
        <dbReference type="HAMAP-Rule" id="MF_00114"/>
    </source>
</evidence>
<keyword id="KW-0963">Cytoplasm</keyword>
<keyword id="KW-0456">Lyase</keyword>
<keyword id="KW-0704">Schiff base</keyword>
<protein>
    <recommendedName>
        <fullName evidence="1">Deoxyribose-phosphate aldolase</fullName>
        <shortName evidence="1">DERA</shortName>
        <ecNumber evidence="1">4.1.2.4</ecNumber>
    </recommendedName>
    <alternativeName>
        <fullName evidence="1">2-deoxy-D-ribose 5-phosphate aldolase</fullName>
    </alternativeName>
    <alternativeName>
        <fullName evidence="1">Phosphodeoxyriboaldolase</fullName>
        <shortName evidence="1">Deoxyriboaldolase</shortName>
    </alternativeName>
</protein>
<comment type="function">
    <text evidence="1">Catalyzes a reversible aldol reaction between acetaldehyde and D-glyceraldehyde 3-phosphate to generate 2-deoxy-D-ribose 5-phosphate.</text>
</comment>
<comment type="catalytic activity">
    <reaction evidence="1">
        <text>2-deoxy-D-ribose 5-phosphate = D-glyceraldehyde 3-phosphate + acetaldehyde</text>
        <dbReference type="Rhea" id="RHEA:12821"/>
        <dbReference type="ChEBI" id="CHEBI:15343"/>
        <dbReference type="ChEBI" id="CHEBI:59776"/>
        <dbReference type="ChEBI" id="CHEBI:62877"/>
        <dbReference type="EC" id="4.1.2.4"/>
    </reaction>
</comment>
<comment type="pathway">
    <text evidence="1">Carbohydrate degradation; 2-deoxy-D-ribose 1-phosphate degradation; D-glyceraldehyde 3-phosphate and acetaldehyde from 2-deoxy-alpha-D-ribose 1-phosphate: step 2/2.</text>
</comment>
<comment type="subcellular location">
    <subcellularLocation>
        <location evidence="1">Cytoplasm</location>
    </subcellularLocation>
</comment>
<comment type="similarity">
    <text evidence="1">Belongs to the DeoC/FbaB aldolase family. DeoC type 1 subfamily.</text>
</comment>